<feature type="chain" id="PRO_1000051388" description="Asparagine--tRNA ligase">
    <location>
        <begin position="1"/>
        <end position="466"/>
    </location>
</feature>
<protein>
    <recommendedName>
        <fullName evidence="1">Asparagine--tRNA ligase</fullName>
        <ecNumber evidence="1">6.1.1.22</ecNumber>
    </recommendedName>
    <alternativeName>
        <fullName evidence="1">Asparaginyl-tRNA synthetase</fullName>
        <shortName evidence="1">AsnRS</shortName>
    </alternativeName>
</protein>
<sequence>MSVISITDVLAGNFPVNESITIHGWIRTRRDSKAGISFLALHDGSCFDAIQAIVPNELDNYESDVLKLTTGCSVKVTGILVESPGKGQAFEIQATEVEVLGFVEDPDTYPMAAKRHSIEFLREQAHLRPRTNIGGAVTRVRNCLAQAVHRFLHSKGYFWISTPLITGSDCEGAGEMFRVSTLDMENLPRNDEGKVDYNKDFFGKETFLTVSGQLNVETYCNALSKVYTFGPTFRAENSNTTRHLAEFWMVEPEIAFADLSDAADLAEEMLKYVFKAVLEERPDDMAFFQQRVDKTVLDRLNSVINTDFVRLDYTDAITILENCGKKFENQVSWGVDLNSEHERYLAEEHFNGPVVLQNYPKDIKSFYMRLNDDGKTVAAMDILAPGIGEIIGGSQREERLDVLDSRLEEMGLDIADYGWYRDLRRYGTVPHSGFGLGFERLVAYATGMQNVRDVIPFPRTPNNAAF</sequence>
<keyword id="KW-0030">Aminoacyl-tRNA synthetase</keyword>
<keyword id="KW-0067">ATP-binding</keyword>
<keyword id="KW-0963">Cytoplasm</keyword>
<keyword id="KW-0436">Ligase</keyword>
<keyword id="KW-0547">Nucleotide-binding</keyword>
<keyword id="KW-0648">Protein biosynthesis</keyword>
<name>SYN_COLP3</name>
<accession>Q481G3</accession>
<evidence type="ECO:0000255" key="1">
    <source>
        <dbReference type="HAMAP-Rule" id="MF_00534"/>
    </source>
</evidence>
<comment type="catalytic activity">
    <reaction evidence="1">
        <text>tRNA(Asn) + L-asparagine + ATP = L-asparaginyl-tRNA(Asn) + AMP + diphosphate + H(+)</text>
        <dbReference type="Rhea" id="RHEA:11180"/>
        <dbReference type="Rhea" id="RHEA-COMP:9659"/>
        <dbReference type="Rhea" id="RHEA-COMP:9674"/>
        <dbReference type="ChEBI" id="CHEBI:15378"/>
        <dbReference type="ChEBI" id="CHEBI:30616"/>
        <dbReference type="ChEBI" id="CHEBI:33019"/>
        <dbReference type="ChEBI" id="CHEBI:58048"/>
        <dbReference type="ChEBI" id="CHEBI:78442"/>
        <dbReference type="ChEBI" id="CHEBI:78515"/>
        <dbReference type="ChEBI" id="CHEBI:456215"/>
        <dbReference type="EC" id="6.1.1.22"/>
    </reaction>
</comment>
<comment type="subunit">
    <text evidence="1">Homodimer.</text>
</comment>
<comment type="subcellular location">
    <subcellularLocation>
        <location evidence="1">Cytoplasm</location>
    </subcellularLocation>
</comment>
<comment type="similarity">
    <text evidence="1">Belongs to the class-II aminoacyl-tRNA synthetase family.</text>
</comment>
<gene>
    <name evidence="1" type="primary">asnS</name>
    <name type="ordered locus">CPS_2591</name>
</gene>
<reference key="1">
    <citation type="journal article" date="2005" name="Proc. Natl. Acad. Sci. U.S.A.">
        <title>The psychrophilic lifestyle as revealed by the genome sequence of Colwellia psychrerythraea 34H through genomic and proteomic analyses.</title>
        <authorList>
            <person name="Methe B.A."/>
            <person name="Nelson K.E."/>
            <person name="Deming J.W."/>
            <person name="Momen B."/>
            <person name="Melamud E."/>
            <person name="Zhang X."/>
            <person name="Moult J."/>
            <person name="Madupu R."/>
            <person name="Nelson W.C."/>
            <person name="Dodson R.J."/>
            <person name="Brinkac L.M."/>
            <person name="Daugherty S.C."/>
            <person name="Durkin A.S."/>
            <person name="DeBoy R.T."/>
            <person name="Kolonay J.F."/>
            <person name="Sullivan S.A."/>
            <person name="Zhou L."/>
            <person name="Davidsen T.M."/>
            <person name="Wu M."/>
            <person name="Huston A.L."/>
            <person name="Lewis M."/>
            <person name="Weaver B."/>
            <person name="Weidman J.F."/>
            <person name="Khouri H."/>
            <person name="Utterback T.R."/>
            <person name="Feldblyum T.V."/>
            <person name="Fraser C.M."/>
        </authorList>
    </citation>
    <scope>NUCLEOTIDE SEQUENCE [LARGE SCALE GENOMIC DNA]</scope>
    <source>
        <strain>34H / ATCC BAA-681</strain>
    </source>
</reference>
<proteinExistence type="inferred from homology"/>
<dbReference type="EC" id="6.1.1.22" evidence="1"/>
<dbReference type="EMBL" id="CP000083">
    <property type="protein sequence ID" value="AAZ27879.1"/>
    <property type="molecule type" value="Genomic_DNA"/>
</dbReference>
<dbReference type="RefSeq" id="WP_011043400.1">
    <property type="nucleotide sequence ID" value="NC_003910.7"/>
</dbReference>
<dbReference type="SMR" id="Q481G3"/>
<dbReference type="STRING" id="167879.CPS_2591"/>
<dbReference type="KEGG" id="cps:CPS_2591"/>
<dbReference type="eggNOG" id="COG0017">
    <property type="taxonomic scope" value="Bacteria"/>
</dbReference>
<dbReference type="HOGENOM" id="CLU_004553_2_0_6"/>
<dbReference type="Proteomes" id="UP000000547">
    <property type="component" value="Chromosome"/>
</dbReference>
<dbReference type="GO" id="GO:0005737">
    <property type="term" value="C:cytoplasm"/>
    <property type="evidence" value="ECO:0007669"/>
    <property type="project" value="UniProtKB-SubCell"/>
</dbReference>
<dbReference type="GO" id="GO:0004816">
    <property type="term" value="F:asparagine-tRNA ligase activity"/>
    <property type="evidence" value="ECO:0007669"/>
    <property type="project" value="UniProtKB-UniRule"/>
</dbReference>
<dbReference type="GO" id="GO:0005524">
    <property type="term" value="F:ATP binding"/>
    <property type="evidence" value="ECO:0007669"/>
    <property type="project" value="UniProtKB-UniRule"/>
</dbReference>
<dbReference type="GO" id="GO:0003676">
    <property type="term" value="F:nucleic acid binding"/>
    <property type="evidence" value="ECO:0007669"/>
    <property type="project" value="InterPro"/>
</dbReference>
<dbReference type="GO" id="GO:0006421">
    <property type="term" value="P:asparaginyl-tRNA aminoacylation"/>
    <property type="evidence" value="ECO:0007669"/>
    <property type="project" value="UniProtKB-UniRule"/>
</dbReference>
<dbReference type="CDD" id="cd00776">
    <property type="entry name" value="AsxRS_core"/>
    <property type="match status" value="1"/>
</dbReference>
<dbReference type="CDD" id="cd04318">
    <property type="entry name" value="EcAsnRS_like_N"/>
    <property type="match status" value="1"/>
</dbReference>
<dbReference type="FunFam" id="3.30.930.10:FF:000016">
    <property type="entry name" value="Asparagine--tRNA ligase"/>
    <property type="match status" value="1"/>
</dbReference>
<dbReference type="Gene3D" id="3.30.930.10">
    <property type="entry name" value="Bira Bifunctional Protein, Domain 2"/>
    <property type="match status" value="1"/>
</dbReference>
<dbReference type="Gene3D" id="2.40.50.140">
    <property type="entry name" value="Nucleic acid-binding proteins"/>
    <property type="match status" value="1"/>
</dbReference>
<dbReference type="HAMAP" id="MF_00534">
    <property type="entry name" value="Asn_tRNA_synth"/>
    <property type="match status" value="1"/>
</dbReference>
<dbReference type="InterPro" id="IPR004364">
    <property type="entry name" value="Aa-tRNA-synt_II"/>
</dbReference>
<dbReference type="InterPro" id="IPR006195">
    <property type="entry name" value="aa-tRNA-synth_II"/>
</dbReference>
<dbReference type="InterPro" id="IPR045864">
    <property type="entry name" value="aa-tRNA-synth_II/BPL/LPL"/>
</dbReference>
<dbReference type="InterPro" id="IPR004522">
    <property type="entry name" value="Asn-tRNA-ligase"/>
</dbReference>
<dbReference type="InterPro" id="IPR002312">
    <property type="entry name" value="Asp/Asn-tRNA-synth_IIb"/>
</dbReference>
<dbReference type="InterPro" id="IPR012340">
    <property type="entry name" value="NA-bd_OB-fold"/>
</dbReference>
<dbReference type="InterPro" id="IPR004365">
    <property type="entry name" value="NA-bd_OB_tRNA"/>
</dbReference>
<dbReference type="NCBIfam" id="TIGR00457">
    <property type="entry name" value="asnS"/>
    <property type="match status" value="1"/>
</dbReference>
<dbReference type="NCBIfam" id="NF003037">
    <property type="entry name" value="PRK03932.1"/>
    <property type="match status" value="1"/>
</dbReference>
<dbReference type="PANTHER" id="PTHR22594:SF34">
    <property type="entry name" value="ASPARAGINE--TRNA LIGASE, MITOCHONDRIAL-RELATED"/>
    <property type="match status" value="1"/>
</dbReference>
<dbReference type="PANTHER" id="PTHR22594">
    <property type="entry name" value="ASPARTYL/LYSYL-TRNA SYNTHETASE"/>
    <property type="match status" value="1"/>
</dbReference>
<dbReference type="Pfam" id="PF00152">
    <property type="entry name" value="tRNA-synt_2"/>
    <property type="match status" value="1"/>
</dbReference>
<dbReference type="Pfam" id="PF01336">
    <property type="entry name" value="tRNA_anti-codon"/>
    <property type="match status" value="1"/>
</dbReference>
<dbReference type="PRINTS" id="PR01042">
    <property type="entry name" value="TRNASYNTHASP"/>
</dbReference>
<dbReference type="SUPFAM" id="SSF55681">
    <property type="entry name" value="Class II aaRS and biotin synthetases"/>
    <property type="match status" value="1"/>
</dbReference>
<dbReference type="SUPFAM" id="SSF50249">
    <property type="entry name" value="Nucleic acid-binding proteins"/>
    <property type="match status" value="1"/>
</dbReference>
<dbReference type="PROSITE" id="PS50862">
    <property type="entry name" value="AA_TRNA_LIGASE_II"/>
    <property type="match status" value="1"/>
</dbReference>
<organism>
    <name type="scientific">Colwellia psychrerythraea (strain 34H / ATCC BAA-681)</name>
    <name type="common">Vibrio psychroerythus</name>
    <dbReference type="NCBI Taxonomy" id="167879"/>
    <lineage>
        <taxon>Bacteria</taxon>
        <taxon>Pseudomonadati</taxon>
        <taxon>Pseudomonadota</taxon>
        <taxon>Gammaproteobacteria</taxon>
        <taxon>Alteromonadales</taxon>
        <taxon>Colwelliaceae</taxon>
        <taxon>Colwellia</taxon>
    </lineage>
</organism>